<proteinExistence type="evidence at transcript level"/>
<keyword id="KW-1003">Cell membrane</keyword>
<keyword id="KW-0202">Cytokine</keyword>
<keyword id="KW-1015">Disulfide bond</keyword>
<keyword id="KW-0325">Glycoprotein</keyword>
<keyword id="KW-0449">Lipoprotein</keyword>
<keyword id="KW-0472">Membrane</keyword>
<keyword id="KW-0519">Myristate</keyword>
<keyword id="KW-0597">Phosphoprotein</keyword>
<keyword id="KW-0964">Secreted</keyword>
<keyword id="KW-0735">Signal-anchor</keyword>
<keyword id="KW-0812">Transmembrane</keyword>
<keyword id="KW-1133">Transmembrane helix</keyword>
<comment type="function">
    <text evidence="2 3">Cytokine that binds to TNFRSF1A/TNFR1 and TNFRSF1B/TNFBR. It is mainly secreted by macrophages and can induce cell death of certain tumor cell lines. It is potent pyrogen causing fever by direct action or by stimulation of interleukin-1 secretion and is implicated in the induction of cachexia, Under certain conditions it can stimulate cell proliferation and induce cell differentiation (By similarity). Induces insulin resistance in adipocytes via inhibition of insulin-induced IRS1 tyrosine phosphorylation and insulin-induced glucose uptake. Induces GKAP42 protein degradation in adipocytes which is partially responsible for TNF-induced insulin resistance (By similarity). Plays a role in angiogenesis by inducing VEGF production synergistically with IL1B and IL6 (By similarity). Promotes osteoclastogenesis and therefore mediates bone resorption (By similarity).</text>
</comment>
<comment type="function">
    <text evidence="2">The TNF intracellular domain (ICD) form induces IL12 production in dendritic cells.</text>
</comment>
<comment type="subunit">
    <text evidence="1">Homotrimer. Interacts with SPPL2B (By similarity).</text>
</comment>
<comment type="subcellular location">
    <subcellularLocation>
        <location evidence="1">Cell membrane</location>
        <topology evidence="1">Single-pass type II membrane protein</topology>
    </subcellularLocation>
</comment>
<comment type="subcellular location">
    <molecule>Tumor necrosis factor, membrane form</molecule>
    <subcellularLocation>
        <location evidence="1">Membrane</location>
        <topology evidence="1">Single-pass type II membrane protein</topology>
    </subcellularLocation>
</comment>
<comment type="subcellular location">
    <molecule>Tumor necrosis factor, soluble form</molecule>
    <subcellularLocation>
        <location evidence="1">Secreted</location>
    </subcellularLocation>
</comment>
<comment type="subcellular location">
    <molecule>C-domain 1</molecule>
    <subcellularLocation>
        <location evidence="1">Secreted</location>
    </subcellularLocation>
</comment>
<comment type="subcellular location">
    <molecule>C-domain 2</molecule>
    <subcellularLocation>
        <location evidence="1">Secreted</location>
    </subcellularLocation>
</comment>
<comment type="PTM">
    <text evidence="1">The soluble form derives from the membrane form by proteolytic processing. The membrane-bound form is further proteolytically processed by SPPL2A or SPPL2B through regulated intramembrane proteolysis producing TNF intracellular domains (ICD1 and ICD2) released in the cytosol and TNF C-domain 1 and C-domain 2 secreted into the extracellular space (By similarity).</text>
</comment>
<comment type="PTM">
    <text evidence="1">The membrane form, but not the soluble form, is phosphorylated on serine residues. Dephosphorylation of the membrane form occurs by binding to soluble TNFRSF1A/TNFR1 (By similarity).</text>
</comment>
<comment type="PTM">
    <text evidence="1">O-glycosylated; glycans contain galactose, N-acetylgalactosamine and N-acetylneuraminic acid.</text>
</comment>
<comment type="PTM">
    <molecule>Tumor necrosis factor, soluble form</molecule>
    <text evidence="2">The soluble form is demyristoylated by SIRT6, promoting its secretion.</text>
</comment>
<comment type="similarity">
    <text evidence="6">Belongs to the tumor necrosis factor family.</text>
</comment>
<dbReference type="EMBL" id="AY610957">
    <property type="protein sequence ID" value="AAU11146.1"/>
    <property type="molecule type" value="mRNA"/>
</dbReference>
<dbReference type="SMR" id="Q539C2"/>
<dbReference type="GlyCosmos" id="Q539C2">
    <property type="glycosylation" value="1 site, No reported glycans"/>
</dbReference>
<dbReference type="GO" id="GO:0009986">
    <property type="term" value="C:cell surface"/>
    <property type="evidence" value="ECO:0007669"/>
    <property type="project" value="TreeGrafter"/>
</dbReference>
<dbReference type="GO" id="GO:0005615">
    <property type="term" value="C:extracellular space"/>
    <property type="evidence" value="ECO:0007669"/>
    <property type="project" value="UniProtKB-KW"/>
</dbReference>
<dbReference type="GO" id="GO:0005886">
    <property type="term" value="C:plasma membrane"/>
    <property type="evidence" value="ECO:0007669"/>
    <property type="project" value="UniProtKB-SubCell"/>
</dbReference>
<dbReference type="GO" id="GO:0005125">
    <property type="term" value="F:cytokine activity"/>
    <property type="evidence" value="ECO:0007669"/>
    <property type="project" value="UniProtKB-KW"/>
</dbReference>
<dbReference type="GO" id="GO:0005164">
    <property type="term" value="F:tumor necrosis factor receptor binding"/>
    <property type="evidence" value="ECO:0007669"/>
    <property type="project" value="InterPro"/>
</dbReference>
<dbReference type="GO" id="GO:0008625">
    <property type="term" value="P:extrinsic apoptotic signaling pathway via death domain receptors"/>
    <property type="evidence" value="ECO:0007669"/>
    <property type="project" value="TreeGrafter"/>
</dbReference>
<dbReference type="GO" id="GO:0006955">
    <property type="term" value="P:immune response"/>
    <property type="evidence" value="ECO:0007669"/>
    <property type="project" value="InterPro"/>
</dbReference>
<dbReference type="GO" id="GO:0097527">
    <property type="term" value="P:necroptotic signaling pathway"/>
    <property type="evidence" value="ECO:0000250"/>
    <property type="project" value="CAFA"/>
</dbReference>
<dbReference type="GO" id="GO:0043123">
    <property type="term" value="P:positive regulation of canonical NF-kappaB signal transduction"/>
    <property type="evidence" value="ECO:0007669"/>
    <property type="project" value="TreeGrafter"/>
</dbReference>
<dbReference type="GO" id="GO:2001238">
    <property type="term" value="P:positive regulation of extrinsic apoptotic signaling pathway"/>
    <property type="evidence" value="ECO:0007669"/>
    <property type="project" value="TreeGrafter"/>
</dbReference>
<dbReference type="GO" id="GO:0051092">
    <property type="term" value="P:positive regulation of NF-kappaB transcription factor activity"/>
    <property type="evidence" value="ECO:0000250"/>
    <property type="project" value="UniProtKB"/>
</dbReference>
<dbReference type="GO" id="GO:0045944">
    <property type="term" value="P:positive regulation of transcription by RNA polymerase II"/>
    <property type="evidence" value="ECO:0007669"/>
    <property type="project" value="TreeGrafter"/>
</dbReference>
<dbReference type="GO" id="GO:0065008">
    <property type="term" value="P:regulation of biological quality"/>
    <property type="evidence" value="ECO:0007669"/>
    <property type="project" value="UniProtKB-ARBA"/>
</dbReference>
<dbReference type="GO" id="GO:0050793">
    <property type="term" value="P:regulation of developmental process"/>
    <property type="evidence" value="ECO:0007669"/>
    <property type="project" value="UniProtKB-ARBA"/>
</dbReference>
<dbReference type="GO" id="GO:0051239">
    <property type="term" value="P:regulation of multicellular organismal process"/>
    <property type="evidence" value="ECO:0007669"/>
    <property type="project" value="UniProtKB-ARBA"/>
</dbReference>
<dbReference type="GO" id="GO:0051046">
    <property type="term" value="P:regulation of secretion"/>
    <property type="evidence" value="ECO:0007669"/>
    <property type="project" value="UniProtKB-ARBA"/>
</dbReference>
<dbReference type="GO" id="GO:0033209">
    <property type="term" value="P:tumor necrosis factor-mediated signaling pathway"/>
    <property type="evidence" value="ECO:0007669"/>
    <property type="project" value="TreeGrafter"/>
</dbReference>
<dbReference type="GO" id="GO:0010573">
    <property type="term" value="P:vascular endothelial growth factor production"/>
    <property type="evidence" value="ECO:0000250"/>
    <property type="project" value="UniProtKB"/>
</dbReference>
<dbReference type="CDD" id="cd00184">
    <property type="entry name" value="TNF"/>
    <property type="match status" value="1"/>
</dbReference>
<dbReference type="FunFam" id="2.60.120.40:FF:000007">
    <property type="entry name" value="Tumor necrosis factor"/>
    <property type="match status" value="1"/>
</dbReference>
<dbReference type="Gene3D" id="2.60.120.40">
    <property type="match status" value="1"/>
</dbReference>
<dbReference type="InterPro" id="IPR006053">
    <property type="entry name" value="TNF"/>
</dbReference>
<dbReference type="InterPro" id="IPR002959">
    <property type="entry name" value="TNF_alpha"/>
</dbReference>
<dbReference type="InterPro" id="IPR021184">
    <property type="entry name" value="TNF_CS"/>
</dbReference>
<dbReference type="InterPro" id="IPR006052">
    <property type="entry name" value="TNF_dom"/>
</dbReference>
<dbReference type="InterPro" id="IPR008983">
    <property type="entry name" value="Tumour_necrosis_fac-like_dom"/>
</dbReference>
<dbReference type="PANTHER" id="PTHR11471:SF23">
    <property type="entry name" value="TUMOR NECROSIS FACTOR"/>
    <property type="match status" value="1"/>
</dbReference>
<dbReference type="PANTHER" id="PTHR11471">
    <property type="entry name" value="TUMOR NECROSIS FACTOR FAMILY MEMBER"/>
    <property type="match status" value="1"/>
</dbReference>
<dbReference type="Pfam" id="PF00229">
    <property type="entry name" value="TNF"/>
    <property type="match status" value="1"/>
</dbReference>
<dbReference type="PRINTS" id="PR01234">
    <property type="entry name" value="TNECROSISFCT"/>
</dbReference>
<dbReference type="PRINTS" id="PR01235">
    <property type="entry name" value="TNFALPHA"/>
</dbReference>
<dbReference type="SMART" id="SM00207">
    <property type="entry name" value="TNF"/>
    <property type="match status" value="1"/>
</dbReference>
<dbReference type="SUPFAM" id="SSF49842">
    <property type="entry name" value="TNF-like"/>
    <property type="match status" value="1"/>
</dbReference>
<dbReference type="PROSITE" id="PS00251">
    <property type="entry name" value="THD_1"/>
    <property type="match status" value="1"/>
</dbReference>
<dbReference type="PROSITE" id="PS50049">
    <property type="entry name" value="THD_2"/>
    <property type="match status" value="1"/>
</dbReference>
<accession>Q539C2</accession>
<name>TNFA_TUPTA</name>
<protein>
    <recommendedName>
        <fullName>Tumor necrosis factor</fullName>
    </recommendedName>
    <alternativeName>
        <fullName>Cachectin</fullName>
    </alternativeName>
    <alternativeName>
        <fullName>TNF-alpha</fullName>
    </alternativeName>
    <alternativeName>
        <fullName>Tumor necrosis factor ligand superfamily member 2</fullName>
        <shortName>TNF-a</shortName>
    </alternativeName>
    <component>
        <recommendedName>
            <fullName>Tumor necrosis factor, membrane form</fullName>
        </recommendedName>
        <alternativeName>
            <fullName>N-terminal fragment</fullName>
            <shortName>NTF</shortName>
        </alternativeName>
    </component>
    <component>
        <recommendedName>
            <fullName>Intracellular domain 1</fullName>
            <shortName>ICD1</shortName>
        </recommendedName>
    </component>
    <component>
        <recommendedName>
            <fullName>Intracellular domain 2</fullName>
            <shortName>ICD2</shortName>
        </recommendedName>
    </component>
    <component>
        <recommendedName>
            <fullName>C-domain 1</fullName>
        </recommendedName>
    </component>
    <component>
        <recommendedName>
            <fullName>C-domain 2</fullName>
        </recommendedName>
    </component>
    <component>
        <recommendedName>
            <fullName>Tumor necrosis factor, soluble form</fullName>
        </recommendedName>
    </component>
</protein>
<sequence length="234" mass="25470">MSTENMILDVHLAEEALPKKAGGPQSSRRCMLLSLLSFLLVAGATTLFCLLHFGVIGPQKEELPDGLRLVNPLTQTLTLRSSGIPSDKPAAHVIANPQNKGELQWLNRRANTLLTNGMQLVDNQLVVPSDGLYLIYSQVLFTGLGCPSTPVLFTHTVSCVAVSYNNKVNLLSAIKSPCQKETAEGAEAKPWYEPIYQGGVFQLQKGDRLSAEVNLPRYLDFAESGQVYFGVIAL</sequence>
<feature type="chain" id="PRO_0000256650" description="Tumor necrosis factor, membrane form">
    <location>
        <begin position="1"/>
        <end position="234"/>
    </location>
</feature>
<feature type="chain" id="PRO_0000417303" description="Intracellular domain 1" evidence="1">
    <location>
        <begin position="1"/>
        <end position="39"/>
    </location>
</feature>
<feature type="chain" id="PRO_0000417304" description="Intracellular domain 2" evidence="1">
    <location>
        <begin position="1"/>
        <end position="35"/>
    </location>
</feature>
<feature type="chain" id="PRO_0000417305" description="C-domain 1" evidence="1">
    <location>
        <begin position="50"/>
        <end status="unknown"/>
    </location>
</feature>
<feature type="chain" id="PRO_0000417306" description="C-domain 2" evidence="1">
    <location>
        <begin position="52"/>
        <end status="unknown"/>
    </location>
</feature>
<feature type="chain" id="PRO_0000256651" description="Tumor necrosis factor, soluble form">
    <location>
        <begin position="79" status="uncertain"/>
        <end position="234"/>
    </location>
</feature>
<feature type="topological domain" description="Cytoplasmic" evidence="4">
    <location>
        <begin position="1"/>
        <end position="35"/>
    </location>
</feature>
<feature type="transmembrane region" description="Helical; Signal-anchor for type II membrane protein" evidence="4">
    <location>
        <begin position="36"/>
        <end position="56"/>
    </location>
</feature>
<feature type="topological domain" description="Extracellular" evidence="4">
    <location>
        <begin position="57"/>
        <end position="234"/>
    </location>
</feature>
<feature type="domain" description="THD" evidence="5">
    <location>
        <begin position="89"/>
        <end position="234"/>
    </location>
</feature>
<feature type="site" description="Cleavage; by SPPL2A or SPPL2B" evidence="1">
    <location>
        <begin position="34"/>
        <end position="35"/>
    </location>
</feature>
<feature type="site" description="Cleavage; by SPPL2A or SPPL2B" evidence="1">
    <location>
        <begin position="39"/>
        <end position="40"/>
    </location>
</feature>
<feature type="site" description="Cleavage; by SPPL2A or SPPL2B" evidence="1">
    <location>
        <begin position="49"/>
        <end position="50"/>
    </location>
</feature>
<feature type="site" description="Cleavage; by SPPL2A or SPPL2B" evidence="1">
    <location>
        <begin position="51"/>
        <end position="52"/>
    </location>
</feature>
<feature type="site" description="Cleavage; by ADAM17" evidence="4">
    <location>
        <begin position="78"/>
        <end position="79"/>
    </location>
</feature>
<feature type="modified residue" description="Phosphoserine; by CK1" evidence="1">
    <location>
        <position position="2"/>
    </location>
</feature>
<feature type="lipid moiety-binding region" description="N6-myristoyl lysine" evidence="2">
    <location>
        <position position="19"/>
    </location>
</feature>
<feature type="lipid moiety-binding region" description="N6-myristoyl lysine" evidence="2">
    <location>
        <position position="20"/>
    </location>
</feature>
<feature type="glycosylation site" description="O-linked (GalNAc...) serine; in soluble form" evidence="1">
    <location>
        <position position="82"/>
    </location>
</feature>
<feature type="disulfide bond" evidence="5">
    <location>
        <begin position="146"/>
        <end position="178"/>
    </location>
</feature>
<reference key="1">
    <citation type="submission" date="2004-04" db="EMBL/GenBank/DDBJ databases">
        <title>Molecular characterization of Tupaia tana tumor necrosis factor alpha.</title>
        <authorList>
            <person name="Lu M."/>
            <person name="Lu Y."/>
        </authorList>
    </citation>
    <scope>NUCLEOTIDE SEQUENCE [MRNA]</scope>
</reference>
<organism>
    <name type="scientific">Tupaia tana</name>
    <name type="common">Large tree shrew</name>
    <dbReference type="NCBI Taxonomy" id="70687"/>
    <lineage>
        <taxon>Eukaryota</taxon>
        <taxon>Metazoa</taxon>
        <taxon>Chordata</taxon>
        <taxon>Craniata</taxon>
        <taxon>Vertebrata</taxon>
        <taxon>Euteleostomi</taxon>
        <taxon>Mammalia</taxon>
        <taxon>Eutheria</taxon>
        <taxon>Euarchontoglires</taxon>
        <taxon>Scandentia</taxon>
        <taxon>Tupaiidae</taxon>
        <taxon>Tupaia</taxon>
    </lineage>
</organism>
<evidence type="ECO:0000250" key="1"/>
<evidence type="ECO:0000250" key="2">
    <source>
        <dbReference type="UniProtKB" id="P01375"/>
    </source>
</evidence>
<evidence type="ECO:0000250" key="3">
    <source>
        <dbReference type="UniProtKB" id="P06804"/>
    </source>
</evidence>
<evidence type="ECO:0000255" key="4"/>
<evidence type="ECO:0000255" key="5">
    <source>
        <dbReference type="PROSITE-ProRule" id="PRU01387"/>
    </source>
</evidence>
<evidence type="ECO:0000305" key="6"/>
<gene>
    <name type="primary">TNF</name>
    <name type="synonym">TNFA</name>
    <name type="synonym">TNFSF2</name>
</gene>